<gene>
    <name evidence="1" type="primary">moaA</name>
    <name type="ordered locus">RHECIAT_CH0002485</name>
</gene>
<evidence type="ECO:0000255" key="1">
    <source>
        <dbReference type="HAMAP-Rule" id="MF_01225"/>
    </source>
</evidence>
<evidence type="ECO:0000255" key="2">
    <source>
        <dbReference type="PROSITE-ProRule" id="PRU01266"/>
    </source>
</evidence>
<feature type="chain" id="PRO_1000139336" description="GTP 3',8-cyclase">
    <location>
        <begin position="1"/>
        <end position="348"/>
    </location>
</feature>
<feature type="domain" description="Radical SAM core" evidence="2">
    <location>
        <begin position="24"/>
        <end position="242"/>
    </location>
</feature>
<feature type="binding site" evidence="1">
    <location>
        <position position="33"/>
    </location>
    <ligand>
        <name>GTP</name>
        <dbReference type="ChEBI" id="CHEBI:37565"/>
    </ligand>
</feature>
<feature type="binding site" evidence="1">
    <location>
        <position position="40"/>
    </location>
    <ligand>
        <name>[4Fe-4S] cluster</name>
        <dbReference type="ChEBI" id="CHEBI:49883"/>
        <label>1</label>
        <note>4Fe-4S-S-AdoMet</note>
    </ligand>
</feature>
<feature type="binding site" evidence="1">
    <location>
        <position position="44"/>
    </location>
    <ligand>
        <name>[4Fe-4S] cluster</name>
        <dbReference type="ChEBI" id="CHEBI:49883"/>
        <label>1</label>
        <note>4Fe-4S-S-AdoMet</note>
    </ligand>
</feature>
<feature type="binding site" evidence="1">
    <location>
        <position position="46"/>
    </location>
    <ligand>
        <name>S-adenosyl-L-methionine</name>
        <dbReference type="ChEBI" id="CHEBI:59789"/>
    </ligand>
</feature>
<feature type="binding site" evidence="1">
    <location>
        <position position="47"/>
    </location>
    <ligand>
        <name>[4Fe-4S] cluster</name>
        <dbReference type="ChEBI" id="CHEBI:49883"/>
        <label>1</label>
        <note>4Fe-4S-S-AdoMet</note>
    </ligand>
</feature>
<feature type="binding site" evidence="1">
    <location>
        <position position="82"/>
    </location>
    <ligand>
        <name>GTP</name>
        <dbReference type="ChEBI" id="CHEBI:37565"/>
    </ligand>
</feature>
<feature type="binding site" evidence="1">
    <location>
        <position position="86"/>
    </location>
    <ligand>
        <name>S-adenosyl-L-methionine</name>
        <dbReference type="ChEBI" id="CHEBI:59789"/>
    </ligand>
</feature>
<feature type="binding site" evidence="1">
    <location>
        <position position="115"/>
    </location>
    <ligand>
        <name>GTP</name>
        <dbReference type="ChEBI" id="CHEBI:37565"/>
    </ligand>
</feature>
<feature type="binding site" evidence="1">
    <location>
        <position position="139"/>
    </location>
    <ligand>
        <name>S-adenosyl-L-methionine</name>
        <dbReference type="ChEBI" id="CHEBI:59789"/>
    </ligand>
</feature>
<feature type="binding site" evidence="1">
    <location>
        <position position="175"/>
    </location>
    <ligand>
        <name>GTP</name>
        <dbReference type="ChEBI" id="CHEBI:37565"/>
    </ligand>
</feature>
<feature type="binding site" evidence="1">
    <location>
        <position position="209"/>
    </location>
    <ligand>
        <name>S-adenosyl-L-methionine</name>
        <dbReference type="ChEBI" id="CHEBI:59789"/>
    </ligand>
</feature>
<feature type="binding site" evidence="1">
    <location>
        <position position="272"/>
    </location>
    <ligand>
        <name>[4Fe-4S] cluster</name>
        <dbReference type="ChEBI" id="CHEBI:49883"/>
        <label>2</label>
        <note>4Fe-4S-substrate</note>
    </ligand>
</feature>
<feature type="binding site" evidence="1">
    <location>
        <position position="275"/>
    </location>
    <ligand>
        <name>[4Fe-4S] cluster</name>
        <dbReference type="ChEBI" id="CHEBI:49883"/>
        <label>2</label>
        <note>4Fe-4S-substrate</note>
    </ligand>
</feature>
<feature type="binding site" evidence="1">
    <location>
        <begin position="277"/>
        <end position="279"/>
    </location>
    <ligand>
        <name>GTP</name>
        <dbReference type="ChEBI" id="CHEBI:37565"/>
    </ligand>
</feature>
<feature type="binding site" evidence="1">
    <location>
        <position position="289"/>
    </location>
    <ligand>
        <name>[4Fe-4S] cluster</name>
        <dbReference type="ChEBI" id="CHEBI:49883"/>
        <label>2</label>
        <note>4Fe-4S-substrate</note>
    </ligand>
</feature>
<accession>B3PQ08</accession>
<organism>
    <name type="scientific">Rhizobium etli (strain CIAT 652)</name>
    <dbReference type="NCBI Taxonomy" id="491916"/>
    <lineage>
        <taxon>Bacteria</taxon>
        <taxon>Pseudomonadati</taxon>
        <taxon>Pseudomonadota</taxon>
        <taxon>Alphaproteobacteria</taxon>
        <taxon>Hyphomicrobiales</taxon>
        <taxon>Rhizobiaceae</taxon>
        <taxon>Rhizobium/Agrobacterium group</taxon>
        <taxon>Rhizobium</taxon>
    </lineage>
</organism>
<dbReference type="EC" id="4.1.99.22" evidence="1"/>
<dbReference type="EMBL" id="CP001074">
    <property type="protein sequence ID" value="ACE91437.1"/>
    <property type="molecule type" value="Genomic_DNA"/>
</dbReference>
<dbReference type="SMR" id="B3PQ08"/>
<dbReference type="KEGG" id="rec:RHECIAT_CH0002485"/>
<dbReference type="eggNOG" id="COG2896">
    <property type="taxonomic scope" value="Bacteria"/>
</dbReference>
<dbReference type="HOGENOM" id="CLU_009273_0_1_5"/>
<dbReference type="UniPathway" id="UPA00344"/>
<dbReference type="Proteomes" id="UP000008817">
    <property type="component" value="Chromosome"/>
</dbReference>
<dbReference type="GO" id="GO:0051539">
    <property type="term" value="F:4 iron, 4 sulfur cluster binding"/>
    <property type="evidence" value="ECO:0007669"/>
    <property type="project" value="UniProtKB-UniRule"/>
</dbReference>
<dbReference type="GO" id="GO:0061799">
    <property type="term" value="F:cyclic pyranopterin monophosphate synthase activity"/>
    <property type="evidence" value="ECO:0007669"/>
    <property type="project" value="TreeGrafter"/>
</dbReference>
<dbReference type="GO" id="GO:0061798">
    <property type="term" value="F:GTP 3',8'-cyclase activity"/>
    <property type="evidence" value="ECO:0007669"/>
    <property type="project" value="UniProtKB-UniRule"/>
</dbReference>
<dbReference type="GO" id="GO:0005525">
    <property type="term" value="F:GTP binding"/>
    <property type="evidence" value="ECO:0007669"/>
    <property type="project" value="UniProtKB-UniRule"/>
</dbReference>
<dbReference type="GO" id="GO:0046872">
    <property type="term" value="F:metal ion binding"/>
    <property type="evidence" value="ECO:0007669"/>
    <property type="project" value="UniProtKB-KW"/>
</dbReference>
<dbReference type="GO" id="GO:1904047">
    <property type="term" value="F:S-adenosyl-L-methionine binding"/>
    <property type="evidence" value="ECO:0007669"/>
    <property type="project" value="UniProtKB-UniRule"/>
</dbReference>
<dbReference type="GO" id="GO:0006777">
    <property type="term" value="P:Mo-molybdopterin cofactor biosynthetic process"/>
    <property type="evidence" value="ECO:0007669"/>
    <property type="project" value="UniProtKB-UniRule"/>
</dbReference>
<dbReference type="CDD" id="cd01335">
    <property type="entry name" value="Radical_SAM"/>
    <property type="match status" value="1"/>
</dbReference>
<dbReference type="CDD" id="cd21117">
    <property type="entry name" value="Twitch_MoaA"/>
    <property type="match status" value="1"/>
</dbReference>
<dbReference type="Gene3D" id="3.20.20.70">
    <property type="entry name" value="Aldolase class I"/>
    <property type="match status" value="1"/>
</dbReference>
<dbReference type="HAMAP" id="MF_01225_B">
    <property type="entry name" value="MoaA_B"/>
    <property type="match status" value="1"/>
</dbReference>
<dbReference type="InterPro" id="IPR013785">
    <property type="entry name" value="Aldolase_TIM"/>
</dbReference>
<dbReference type="InterPro" id="IPR006638">
    <property type="entry name" value="Elp3/MiaA/NifB-like_rSAM"/>
</dbReference>
<dbReference type="InterPro" id="IPR013483">
    <property type="entry name" value="MoaA"/>
</dbReference>
<dbReference type="InterPro" id="IPR000385">
    <property type="entry name" value="MoaA_NifB_PqqE_Fe-S-bd_CS"/>
</dbReference>
<dbReference type="InterPro" id="IPR010505">
    <property type="entry name" value="MoaA_twitch"/>
</dbReference>
<dbReference type="InterPro" id="IPR050105">
    <property type="entry name" value="MoCo_biosynth_MoaA/MoaC"/>
</dbReference>
<dbReference type="InterPro" id="IPR007197">
    <property type="entry name" value="rSAM"/>
</dbReference>
<dbReference type="NCBIfam" id="TIGR02666">
    <property type="entry name" value="moaA"/>
    <property type="match status" value="1"/>
</dbReference>
<dbReference type="PANTHER" id="PTHR22960:SF0">
    <property type="entry name" value="MOLYBDENUM COFACTOR BIOSYNTHESIS PROTEIN 1"/>
    <property type="match status" value="1"/>
</dbReference>
<dbReference type="PANTHER" id="PTHR22960">
    <property type="entry name" value="MOLYBDOPTERIN COFACTOR SYNTHESIS PROTEIN A"/>
    <property type="match status" value="1"/>
</dbReference>
<dbReference type="Pfam" id="PF13353">
    <property type="entry name" value="Fer4_12"/>
    <property type="match status" value="1"/>
</dbReference>
<dbReference type="Pfam" id="PF06463">
    <property type="entry name" value="Mob_synth_C"/>
    <property type="match status" value="1"/>
</dbReference>
<dbReference type="Pfam" id="PF04055">
    <property type="entry name" value="Radical_SAM"/>
    <property type="match status" value="1"/>
</dbReference>
<dbReference type="SFLD" id="SFLDG01383">
    <property type="entry name" value="cyclic_pyranopterin_phosphate"/>
    <property type="match status" value="1"/>
</dbReference>
<dbReference type="SFLD" id="SFLDS00029">
    <property type="entry name" value="Radical_SAM"/>
    <property type="match status" value="1"/>
</dbReference>
<dbReference type="SMART" id="SM00729">
    <property type="entry name" value="Elp3"/>
    <property type="match status" value="1"/>
</dbReference>
<dbReference type="SUPFAM" id="SSF102114">
    <property type="entry name" value="Radical SAM enzymes"/>
    <property type="match status" value="1"/>
</dbReference>
<dbReference type="PROSITE" id="PS01305">
    <property type="entry name" value="MOAA_NIFB_PQQE"/>
    <property type="match status" value="1"/>
</dbReference>
<dbReference type="PROSITE" id="PS51918">
    <property type="entry name" value="RADICAL_SAM"/>
    <property type="match status" value="1"/>
</dbReference>
<keyword id="KW-0004">4Fe-4S</keyword>
<keyword id="KW-0342">GTP-binding</keyword>
<keyword id="KW-0408">Iron</keyword>
<keyword id="KW-0411">Iron-sulfur</keyword>
<keyword id="KW-0456">Lyase</keyword>
<keyword id="KW-0479">Metal-binding</keyword>
<keyword id="KW-0501">Molybdenum cofactor biosynthesis</keyword>
<keyword id="KW-0547">Nucleotide-binding</keyword>
<keyword id="KW-0949">S-adenosyl-L-methionine</keyword>
<sequence>MNTRIGTTGNASPLAADAYPMIDPFGRAVTYLRVSVTDRCDFRCTYCMAENMTFLPKKDLLTLEELDRLCSAFIAKGVRKIRLTGGEPLVRKNIMYLVRQLGKKIGAGLDELTLTTNGSQLSRHAEELYECGVRRINVSLDTLDPEKFRKITRWGDFSKVMEGIDAAQKAGIRIKLNAVALKGFNDAEIPDLLRFAHGRGMDLTVIETMPMGEIDEDRTDQYLPLSELRADLEKQFTLTDIDYQTGGPARYVRVEETGGRLGFITPMTHNFCESCNRVRLTCTGTLYMCLGQNDAADLRAALRATEDDALLHTAIDEAITRKPKGHDFIIDRTHNRPAVARHMSVTGG</sequence>
<proteinExistence type="inferred from homology"/>
<name>MOAA_RHIE6</name>
<comment type="function">
    <text evidence="1">Catalyzes the cyclization of GTP to (8S)-3',8-cyclo-7,8-dihydroguanosine 5'-triphosphate.</text>
</comment>
<comment type="catalytic activity">
    <reaction evidence="1">
        <text>GTP + AH2 + S-adenosyl-L-methionine = (8S)-3',8-cyclo-7,8-dihydroguanosine 5'-triphosphate + 5'-deoxyadenosine + L-methionine + A + H(+)</text>
        <dbReference type="Rhea" id="RHEA:49576"/>
        <dbReference type="ChEBI" id="CHEBI:13193"/>
        <dbReference type="ChEBI" id="CHEBI:15378"/>
        <dbReference type="ChEBI" id="CHEBI:17319"/>
        <dbReference type="ChEBI" id="CHEBI:17499"/>
        <dbReference type="ChEBI" id="CHEBI:37565"/>
        <dbReference type="ChEBI" id="CHEBI:57844"/>
        <dbReference type="ChEBI" id="CHEBI:59789"/>
        <dbReference type="ChEBI" id="CHEBI:131766"/>
        <dbReference type="EC" id="4.1.99.22"/>
    </reaction>
</comment>
<comment type="cofactor">
    <cofactor evidence="1">
        <name>[4Fe-4S] cluster</name>
        <dbReference type="ChEBI" id="CHEBI:49883"/>
    </cofactor>
    <text evidence="1">Binds 2 [4Fe-4S] clusters. Binds 1 [4Fe-4S] cluster coordinated with 3 cysteines and an exchangeable S-adenosyl-L-methionine and 1 [4Fe-4S] cluster coordinated with 3 cysteines and the GTP-derived substrate.</text>
</comment>
<comment type="pathway">
    <text evidence="1">Cofactor biosynthesis; molybdopterin biosynthesis.</text>
</comment>
<comment type="subunit">
    <text evidence="1">Monomer and homodimer.</text>
</comment>
<comment type="similarity">
    <text evidence="1">Belongs to the radical SAM superfamily. MoaA family.</text>
</comment>
<protein>
    <recommendedName>
        <fullName evidence="1">GTP 3',8-cyclase</fullName>
        <ecNumber evidence="1">4.1.99.22</ecNumber>
    </recommendedName>
    <alternativeName>
        <fullName evidence="1">Molybdenum cofactor biosynthesis protein A</fullName>
    </alternativeName>
</protein>
<reference key="1">
    <citation type="journal article" date="2010" name="Appl. Environ. Microbiol.">
        <title>Conserved symbiotic plasmid DNA sequences in the multireplicon pangenomic structure of Rhizobium etli.</title>
        <authorList>
            <person name="Gonzalez V."/>
            <person name="Acosta J.L."/>
            <person name="Santamaria R.I."/>
            <person name="Bustos P."/>
            <person name="Fernandez J.L."/>
            <person name="Hernandez Gonzalez I.L."/>
            <person name="Diaz R."/>
            <person name="Flores M."/>
            <person name="Palacios R."/>
            <person name="Mora J."/>
            <person name="Davila G."/>
        </authorList>
    </citation>
    <scope>NUCLEOTIDE SEQUENCE [LARGE SCALE GENOMIC DNA]</scope>
    <source>
        <strain>CIAT 652</strain>
    </source>
</reference>